<keyword id="KW-0227">DNA damage</keyword>
<keyword id="KW-0234">DNA repair</keyword>
<organism>
    <name type="scientific">Neisseria meningitidis serogroup C (strain 053442)</name>
    <dbReference type="NCBI Taxonomy" id="374833"/>
    <lineage>
        <taxon>Bacteria</taxon>
        <taxon>Pseudomonadati</taxon>
        <taxon>Pseudomonadota</taxon>
        <taxon>Betaproteobacteria</taxon>
        <taxon>Neisseriales</taxon>
        <taxon>Neisseriaceae</taxon>
        <taxon>Neisseria</taxon>
    </lineage>
</organism>
<dbReference type="EMBL" id="CP000381">
    <property type="protein sequence ID" value="ABX73524.1"/>
    <property type="molecule type" value="Genomic_DNA"/>
</dbReference>
<dbReference type="RefSeq" id="WP_012221809.1">
    <property type="nucleotide sequence ID" value="NC_010120.1"/>
</dbReference>
<dbReference type="SMR" id="A9M0G1"/>
<dbReference type="KEGG" id="nmn:NMCC_1353"/>
<dbReference type="HOGENOM" id="CLU_004131_4_2_4"/>
<dbReference type="Proteomes" id="UP000001177">
    <property type="component" value="Chromosome"/>
</dbReference>
<dbReference type="GO" id="GO:0032300">
    <property type="term" value="C:mismatch repair complex"/>
    <property type="evidence" value="ECO:0007669"/>
    <property type="project" value="InterPro"/>
</dbReference>
<dbReference type="GO" id="GO:0005524">
    <property type="term" value="F:ATP binding"/>
    <property type="evidence" value="ECO:0007669"/>
    <property type="project" value="InterPro"/>
</dbReference>
<dbReference type="GO" id="GO:0016887">
    <property type="term" value="F:ATP hydrolysis activity"/>
    <property type="evidence" value="ECO:0007669"/>
    <property type="project" value="InterPro"/>
</dbReference>
<dbReference type="GO" id="GO:0140664">
    <property type="term" value="F:ATP-dependent DNA damage sensor activity"/>
    <property type="evidence" value="ECO:0007669"/>
    <property type="project" value="InterPro"/>
</dbReference>
<dbReference type="GO" id="GO:0030983">
    <property type="term" value="F:mismatched DNA binding"/>
    <property type="evidence" value="ECO:0007669"/>
    <property type="project" value="InterPro"/>
</dbReference>
<dbReference type="GO" id="GO:0006298">
    <property type="term" value="P:mismatch repair"/>
    <property type="evidence" value="ECO:0007669"/>
    <property type="project" value="UniProtKB-UniRule"/>
</dbReference>
<dbReference type="CDD" id="cd16926">
    <property type="entry name" value="HATPase_MutL-MLH-PMS-like"/>
    <property type="match status" value="1"/>
</dbReference>
<dbReference type="CDD" id="cd03482">
    <property type="entry name" value="MutL_Trans_MutL"/>
    <property type="match status" value="1"/>
</dbReference>
<dbReference type="FunFam" id="3.30.230.10:FF:000013">
    <property type="entry name" value="DNA mismatch repair endonuclease MutL"/>
    <property type="match status" value="1"/>
</dbReference>
<dbReference type="FunFam" id="3.30.565.10:FF:000003">
    <property type="entry name" value="DNA mismatch repair endonuclease MutL"/>
    <property type="match status" value="1"/>
</dbReference>
<dbReference type="Gene3D" id="3.30.230.10">
    <property type="match status" value="1"/>
</dbReference>
<dbReference type="Gene3D" id="3.30.565.10">
    <property type="entry name" value="Histidine kinase-like ATPase, C-terminal domain"/>
    <property type="match status" value="1"/>
</dbReference>
<dbReference type="Gene3D" id="3.30.1540.20">
    <property type="entry name" value="MutL, C-terminal domain, dimerisation subdomain"/>
    <property type="match status" value="1"/>
</dbReference>
<dbReference type="Gene3D" id="3.30.1370.100">
    <property type="entry name" value="MutL, C-terminal domain, regulatory subdomain"/>
    <property type="match status" value="1"/>
</dbReference>
<dbReference type="HAMAP" id="MF_00149">
    <property type="entry name" value="DNA_mis_repair"/>
    <property type="match status" value="1"/>
</dbReference>
<dbReference type="InterPro" id="IPR014762">
    <property type="entry name" value="DNA_mismatch_repair_CS"/>
</dbReference>
<dbReference type="InterPro" id="IPR020667">
    <property type="entry name" value="DNA_mismatch_repair_MutL"/>
</dbReference>
<dbReference type="InterPro" id="IPR013507">
    <property type="entry name" value="DNA_mismatch_S5_2-like"/>
</dbReference>
<dbReference type="InterPro" id="IPR036890">
    <property type="entry name" value="HATPase_C_sf"/>
</dbReference>
<dbReference type="InterPro" id="IPR002099">
    <property type="entry name" value="MutL/Mlh/PMS"/>
</dbReference>
<dbReference type="InterPro" id="IPR038973">
    <property type="entry name" value="MutL/Mlh/Pms-like"/>
</dbReference>
<dbReference type="InterPro" id="IPR014790">
    <property type="entry name" value="MutL_C"/>
</dbReference>
<dbReference type="InterPro" id="IPR042120">
    <property type="entry name" value="MutL_C_dimsub"/>
</dbReference>
<dbReference type="InterPro" id="IPR042121">
    <property type="entry name" value="MutL_C_regsub"/>
</dbReference>
<dbReference type="InterPro" id="IPR037198">
    <property type="entry name" value="MutL_C_sf"/>
</dbReference>
<dbReference type="InterPro" id="IPR020568">
    <property type="entry name" value="Ribosomal_Su5_D2-typ_SF"/>
</dbReference>
<dbReference type="InterPro" id="IPR014721">
    <property type="entry name" value="Ribsml_uS5_D2-typ_fold_subgr"/>
</dbReference>
<dbReference type="NCBIfam" id="TIGR00585">
    <property type="entry name" value="mutl"/>
    <property type="match status" value="1"/>
</dbReference>
<dbReference type="NCBIfam" id="NF000949">
    <property type="entry name" value="PRK00095.1-2"/>
    <property type="match status" value="1"/>
</dbReference>
<dbReference type="PANTHER" id="PTHR10073">
    <property type="entry name" value="DNA MISMATCH REPAIR PROTEIN MLH, PMS, MUTL"/>
    <property type="match status" value="1"/>
</dbReference>
<dbReference type="PANTHER" id="PTHR10073:SF12">
    <property type="entry name" value="DNA MISMATCH REPAIR PROTEIN MLH1"/>
    <property type="match status" value="1"/>
</dbReference>
<dbReference type="Pfam" id="PF01119">
    <property type="entry name" value="DNA_mis_repair"/>
    <property type="match status" value="1"/>
</dbReference>
<dbReference type="Pfam" id="PF13589">
    <property type="entry name" value="HATPase_c_3"/>
    <property type="match status" value="1"/>
</dbReference>
<dbReference type="Pfam" id="PF08676">
    <property type="entry name" value="MutL_C"/>
    <property type="match status" value="1"/>
</dbReference>
<dbReference type="SMART" id="SM01340">
    <property type="entry name" value="DNA_mis_repair"/>
    <property type="match status" value="1"/>
</dbReference>
<dbReference type="SMART" id="SM00853">
    <property type="entry name" value="MutL_C"/>
    <property type="match status" value="1"/>
</dbReference>
<dbReference type="SUPFAM" id="SSF55874">
    <property type="entry name" value="ATPase domain of HSP90 chaperone/DNA topoisomerase II/histidine kinase"/>
    <property type="match status" value="1"/>
</dbReference>
<dbReference type="SUPFAM" id="SSF118116">
    <property type="entry name" value="DNA mismatch repair protein MutL"/>
    <property type="match status" value="1"/>
</dbReference>
<dbReference type="SUPFAM" id="SSF54211">
    <property type="entry name" value="Ribosomal protein S5 domain 2-like"/>
    <property type="match status" value="1"/>
</dbReference>
<dbReference type="PROSITE" id="PS00058">
    <property type="entry name" value="DNA_MISMATCH_REPAIR_1"/>
    <property type="match status" value="1"/>
</dbReference>
<accession>A9M0G1</accession>
<proteinExistence type="inferred from homology"/>
<gene>
    <name evidence="1" type="primary">mutL</name>
    <name type="ordered locus">NMCC_1353</name>
</gene>
<protein>
    <recommendedName>
        <fullName evidence="1">DNA mismatch repair protein MutL</fullName>
    </recommendedName>
</protein>
<name>MUTL_NEIM0</name>
<comment type="function">
    <text evidence="1">This protein is involved in the repair of mismatches in DNA. It is required for dam-dependent methyl-directed DNA mismatch repair. May act as a 'molecular matchmaker', a protein that promotes the formation of a stable complex between two or more DNA-binding proteins in an ATP-dependent manner without itself being part of a final effector complex.</text>
</comment>
<comment type="similarity">
    <text evidence="1">Belongs to the DNA mismatch repair MutL/HexB family.</text>
</comment>
<feature type="chain" id="PRO_1000076701" description="DNA mismatch repair protein MutL">
    <location>
        <begin position="1"/>
        <end position="658"/>
    </location>
</feature>
<feature type="region of interest" description="Disordered" evidence="2">
    <location>
        <begin position="114"/>
        <end position="137"/>
    </location>
</feature>
<feature type="region of interest" description="Disordered" evidence="2">
    <location>
        <begin position="369"/>
        <end position="391"/>
    </location>
</feature>
<feature type="compositionally biased region" description="Basic and acidic residues" evidence="2">
    <location>
        <begin position="114"/>
        <end position="130"/>
    </location>
</feature>
<sequence length="658" mass="71664">MPRIAALPDHLVNQIAAGEVVERPANALKEIVENSIDAGATAIDVELDGGGIRLIRVSDNGSGIHPDDIELALHRHATSKIKTLNDLEHVASMGFRGEGLASIASVSRLTLTSRQEDSSHATQVKAEDGKLSSPTAAAHPVGTTIEAAELFFNTPARRKFLKSENTEYAHCATMLERLALAHPHIAFSLKRDGKPVFKLPAQSLHERIAAIVGDDFQTASLEIDSGNGALRLYGAIAKPTFAKGKTDKQYCFVNHRFVRDKVMLHAVKQAYRDVLHNALTPAFVLFLDLPPEAVDVNVHPTKTEIRFRDSRQVHQLVFHTLNKALADTRADLTESVSNAGEVLHDITGVTPAPMPSENDSENLFDSASDYPTGNKPDTRNAFGSSGKTAPMPYQAARAPQQHSLSLRESRAAMNTYAELYKKTDDIDLELSRLEQARFGNMPSETPIPKTDTPLSDGIPSQSELPPLGFAIAQLLGIYILAQAEDSLLLIDMHAAAERVNYEKMKRQRQENGKLQSQRLLIPVTFAASHEECAALADYAETLAGFGLELSDMGGNTLAVRAVPAMLGKADVVSLAKDVLGELAQVGSSQTIEEHENHILATMSCHGSVRAGRQLTLPEMNALLRDMENTPRSNQCNHGRPTWVKLTLKELDALFLRGQ</sequence>
<reference key="1">
    <citation type="journal article" date="2008" name="Genomics">
        <title>Characterization of ST-4821 complex, a unique Neisseria meningitidis clone.</title>
        <authorList>
            <person name="Peng J."/>
            <person name="Yang L."/>
            <person name="Yang F."/>
            <person name="Yang J."/>
            <person name="Yan Y."/>
            <person name="Nie H."/>
            <person name="Zhang X."/>
            <person name="Xiong Z."/>
            <person name="Jiang Y."/>
            <person name="Cheng F."/>
            <person name="Xu X."/>
            <person name="Chen S."/>
            <person name="Sun L."/>
            <person name="Li W."/>
            <person name="Shen Y."/>
            <person name="Shao Z."/>
            <person name="Liang X."/>
            <person name="Xu J."/>
            <person name="Jin Q."/>
        </authorList>
    </citation>
    <scope>NUCLEOTIDE SEQUENCE [LARGE SCALE GENOMIC DNA]</scope>
    <source>
        <strain>053442</strain>
    </source>
</reference>
<evidence type="ECO:0000255" key="1">
    <source>
        <dbReference type="HAMAP-Rule" id="MF_00149"/>
    </source>
</evidence>
<evidence type="ECO:0000256" key="2">
    <source>
        <dbReference type="SAM" id="MobiDB-lite"/>
    </source>
</evidence>